<reference key="1">
    <citation type="journal article" date="2004" name="Nucleic Acids Res.">
        <title>Unique features revealed by the genome sequence of Acinetobacter sp. ADP1, a versatile and naturally transformation competent bacterium.</title>
        <authorList>
            <person name="Barbe V."/>
            <person name="Vallenet D."/>
            <person name="Fonknechten N."/>
            <person name="Kreimeyer A."/>
            <person name="Oztas S."/>
            <person name="Labarre L."/>
            <person name="Cruveiller S."/>
            <person name="Robert C."/>
            <person name="Duprat S."/>
            <person name="Wincker P."/>
            <person name="Ornston L.N."/>
            <person name="Weissenbach J."/>
            <person name="Marliere P."/>
            <person name="Cohen G.N."/>
            <person name="Medigue C."/>
        </authorList>
    </citation>
    <scope>NUCLEOTIDE SEQUENCE [LARGE SCALE GENOMIC DNA]</scope>
    <source>
        <strain>ATCC 33305 / BD413 / ADP1</strain>
    </source>
</reference>
<proteinExistence type="inferred from homology"/>
<sequence>MPDYRSKTSTHGRNMAGARGLWRATGMKDEDFGKPIIAVVNSFTQFVPGHVHLKDLGQMVAEQIQAAGGVAKEFNTIAVDDGIAMGHDGMLYSLPSRDLIADSVEYMVNAHCADAMVCISNCDKITPGMLMAAMRLNIPVVFVSGGPMEAGKVKFRGNEKAIDLVDAMVVAADDSYTDEEVQAFERSACPTCGSCSGMFTANSMNCLTEALGLSLPGNGSIVATHANRKKLFLKAGELIVSLAKRYYEQDDSSILPRSIATKAAYENAMTLDIAMGGSTNTVLHLLAAASEAEVDFTMDDIDRLSRNVPVLCKVAPAKQDVHMEDVHRAGGIMSILGELDRAKLLNTTVSTVHEKTLQDALNKWDIIRTEDADVYEFFRSSPGGVPTQVAFSQNRYYSTLDGDRENGVIRNAEHAFSKDGGLAVLYGNIALEGCIVKTAGVDESILKFNGTARVFESQDAAVEAILGNEIKAGDVVVIRYEGPRGGPGMQEMLYPTSYLKSKGLGKDCALITDGRFSGGSSGLSIGHISPEAAEGGAIGLVEDGDLIEIDIPNRSMNLKVDDETLAARRKAQDEKGWKPVEERKRKVSKALKVYAMHTTSAAKGAVRIL</sequence>
<evidence type="ECO:0000255" key="1">
    <source>
        <dbReference type="HAMAP-Rule" id="MF_00012"/>
    </source>
</evidence>
<dbReference type="EC" id="4.2.1.9" evidence="1"/>
<dbReference type="EMBL" id="CR543861">
    <property type="protein sequence ID" value="CAG68140.1"/>
    <property type="molecule type" value="Genomic_DNA"/>
</dbReference>
<dbReference type="SMR" id="Q6FCR9"/>
<dbReference type="STRING" id="202950.GCA_001485005_01030"/>
<dbReference type="GeneID" id="45233688"/>
<dbReference type="KEGG" id="aci:ACIAD1266"/>
<dbReference type="eggNOG" id="COG0129">
    <property type="taxonomic scope" value="Bacteria"/>
</dbReference>
<dbReference type="HOGENOM" id="CLU_014271_4_2_6"/>
<dbReference type="OrthoDB" id="9807077at2"/>
<dbReference type="BioCyc" id="ASP62977:ACIAD_RS05825-MONOMER"/>
<dbReference type="UniPathway" id="UPA00047">
    <property type="reaction ID" value="UER00057"/>
</dbReference>
<dbReference type="UniPathway" id="UPA00049">
    <property type="reaction ID" value="UER00061"/>
</dbReference>
<dbReference type="Proteomes" id="UP000000430">
    <property type="component" value="Chromosome"/>
</dbReference>
<dbReference type="GO" id="GO:0005829">
    <property type="term" value="C:cytosol"/>
    <property type="evidence" value="ECO:0007669"/>
    <property type="project" value="TreeGrafter"/>
</dbReference>
<dbReference type="GO" id="GO:0051537">
    <property type="term" value="F:2 iron, 2 sulfur cluster binding"/>
    <property type="evidence" value="ECO:0007669"/>
    <property type="project" value="UniProtKB-UniRule"/>
</dbReference>
<dbReference type="GO" id="GO:0004160">
    <property type="term" value="F:dihydroxy-acid dehydratase activity"/>
    <property type="evidence" value="ECO:0007669"/>
    <property type="project" value="UniProtKB-UniRule"/>
</dbReference>
<dbReference type="GO" id="GO:0000287">
    <property type="term" value="F:magnesium ion binding"/>
    <property type="evidence" value="ECO:0007669"/>
    <property type="project" value="UniProtKB-UniRule"/>
</dbReference>
<dbReference type="GO" id="GO:0009097">
    <property type="term" value="P:isoleucine biosynthetic process"/>
    <property type="evidence" value="ECO:0007669"/>
    <property type="project" value="UniProtKB-UniRule"/>
</dbReference>
<dbReference type="GO" id="GO:0009099">
    <property type="term" value="P:L-valine biosynthetic process"/>
    <property type="evidence" value="ECO:0007669"/>
    <property type="project" value="UniProtKB-UniRule"/>
</dbReference>
<dbReference type="FunFam" id="3.50.30.80:FF:000001">
    <property type="entry name" value="Dihydroxy-acid dehydratase"/>
    <property type="match status" value="1"/>
</dbReference>
<dbReference type="Gene3D" id="3.50.30.80">
    <property type="entry name" value="IlvD/EDD C-terminal domain-like"/>
    <property type="match status" value="1"/>
</dbReference>
<dbReference type="HAMAP" id="MF_00012">
    <property type="entry name" value="IlvD"/>
    <property type="match status" value="1"/>
</dbReference>
<dbReference type="InterPro" id="IPR042096">
    <property type="entry name" value="Dihydro-acid_dehy_C"/>
</dbReference>
<dbReference type="InterPro" id="IPR004404">
    <property type="entry name" value="DihydroxyA_deHydtase"/>
</dbReference>
<dbReference type="InterPro" id="IPR020558">
    <property type="entry name" value="DiOHA_6PGluconate_deHydtase_CS"/>
</dbReference>
<dbReference type="InterPro" id="IPR056740">
    <property type="entry name" value="ILV_EDD_C"/>
</dbReference>
<dbReference type="InterPro" id="IPR000581">
    <property type="entry name" value="ILV_EDD_N"/>
</dbReference>
<dbReference type="InterPro" id="IPR037237">
    <property type="entry name" value="IlvD/EDD_N"/>
</dbReference>
<dbReference type="NCBIfam" id="TIGR00110">
    <property type="entry name" value="ilvD"/>
    <property type="match status" value="1"/>
</dbReference>
<dbReference type="NCBIfam" id="NF009103">
    <property type="entry name" value="PRK12448.1"/>
    <property type="match status" value="1"/>
</dbReference>
<dbReference type="PANTHER" id="PTHR43661">
    <property type="entry name" value="D-XYLONATE DEHYDRATASE"/>
    <property type="match status" value="1"/>
</dbReference>
<dbReference type="PANTHER" id="PTHR43661:SF3">
    <property type="entry name" value="D-XYLONATE DEHYDRATASE YAGF-RELATED"/>
    <property type="match status" value="1"/>
</dbReference>
<dbReference type="Pfam" id="PF24877">
    <property type="entry name" value="ILV_EDD_C"/>
    <property type="match status" value="1"/>
</dbReference>
<dbReference type="Pfam" id="PF00920">
    <property type="entry name" value="ILVD_EDD_N"/>
    <property type="match status" value="1"/>
</dbReference>
<dbReference type="SUPFAM" id="SSF143975">
    <property type="entry name" value="IlvD/EDD N-terminal domain-like"/>
    <property type="match status" value="1"/>
</dbReference>
<dbReference type="SUPFAM" id="SSF52016">
    <property type="entry name" value="LeuD/IlvD-like"/>
    <property type="match status" value="1"/>
</dbReference>
<dbReference type="PROSITE" id="PS00886">
    <property type="entry name" value="ILVD_EDD_1"/>
    <property type="match status" value="1"/>
</dbReference>
<dbReference type="PROSITE" id="PS00887">
    <property type="entry name" value="ILVD_EDD_2"/>
    <property type="match status" value="1"/>
</dbReference>
<accession>Q6FCR9</accession>
<name>ILVD1_ACIAD</name>
<organism>
    <name type="scientific">Acinetobacter baylyi (strain ATCC 33305 / BD413 / ADP1)</name>
    <dbReference type="NCBI Taxonomy" id="62977"/>
    <lineage>
        <taxon>Bacteria</taxon>
        <taxon>Pseudomonadati</taxon>
        <taxon>Pseudomonadota</taxon>
        <taxon>Gammaproteobacteria</taxon>
        <taxon>Moraxellales</taxon>
        <taxon>Moraxellaceae</taxon>
        <taxon>Acinetobacter</taxon>
    </lineage>
</organism>
<gene>
    <name evidence="1" type="primary">ilvD1</name>
    <name type="ordered locus">ACIAD1266</name>
</gene>
<protein>
    <recommendedName>
        <fullName evidence="1">Dihydroxy-acid dehydratase 1</fullName>
        <shortName evidence="1">DAD 1</shortName>
        <ecNumber evidence="1">4.2.1.9</ecNumber>
    </recommendedName>
</protein>
<comment type="function">
    <text evidence="1">Functions in the biosynthesis of branched-chain amino acids. Catalyzes the dehydration of (2R,3R)-2,3-dihydroxy-3-methylpentanoate (2,3-dihydroxy-3-methylvalerate) into 2-oxo-3-methylpentanoate (2-oxo-3-methylvalerate) and of (2R)-2,3-dihydroxy-3-methylbutanoate (2,3-dihydroxyisovalerate) into 2-oxo-3-methylbutanoate (2-oxoisovalerate), the penultimate precursor to L-isoleucine and L-valine, respectively.</text>
</comment>
<comment type="catalytic activity">
    <reaction evidence="1">
        <text>(2R)-2,3-dihydroxy-3-methylbutanoate = 3-methyl-2-oxobutanoate + H2O</text>
        <dbReference type="Rhea" id="RHEA:24809"/>
        <dbReference type="ChEBI" id="CHEBI:11851"/>
        <dbReference type="ChEBI" id="CHEBI:15377"/>
        <dbReference type="ChEBI" id="CHEBI:49072"/>
        <dbReference type="EC" id="4.2.1.9"/>
    </reaction>
    <physiologicalReaction direction="left-to-right" evidence="1">
        <dbReference type="Rhea" id="RHEA:24810"/>
    </physiologicalReaction>
</comment>
<comment type="catalytic activity">
    <reaction evidence="1">
        <text>(2R,3R)-2,3-dihydroxy-3-methylpentanoate = (S)-3-methyl-2-oxopentanoate + H2O</text>
        <dbReference type="Rhea" id="RHEA:27694"/>
        <dbReference type="ChEBI" id="CHEBI:15377"/>
        <dbReference type="ChEBI" id="CHEBI:35146"/>
        <dbReference type="ChEBI" id="CHEBI:49258"/>
        <dbReference type="EC" id="4.2.1.9"/>
    </reaction>
    <physiologicalReaction direction="left-to-right" evidence="1">
        <dbReference type="Rhea" id="RHEA:27695"/>
    </physiologicalReaction>
</comment>
<comment type="cofactor">
    <cofactor evidence="1">
        <name>[2Fe-2S] cluster</name>
        <dbReference type="ChEBI" id="CHEBI:190135"/>
    </cofactor>
    <text evidence="1">Binds 1 [2Fe-2S] cluster per subunit. This cluster acts as a Lewis acid cofactor.</text>
</comment>
<comment type="cofactor">
    <cofactor evidence="1">
        <name>Mg(2+)</name>
        <dbReference type="ChEBI" id="CHEBI:18420"/>
    </cofactor>
</comment>
<comment type="pathway">
    <text evidence="1">Amino-acid biosynthesis; L-isoleucine biosynthesis; L-isoleucine from 2-oxobutanoate: step 3/4.</text>
</comment>
<comment type="pathway">
    <text evidence="1">Amino-acid biosynthesis; L-valine biosynthesis; L-valine from pyruvate: step 3/4.</text>
</comment>
<comment type="subunit">
    <text evidence="1">Homodimer.</text>
</comment>
<comment type="similarity">
    <text evidence="1">Belongs to the IlvD/Edd family.</text>
</comment>
<feature type="chain" id="PRO_0000225362" description="Dihydroxy-acid dehydratase 1">
    <location>
        <begin position="1"/>
        <end position="609"/>
    </location>
</feature>
<feature type="active site" description="Proton acceptor" evidence="1">
    <location>
        <position position="517"/>
    </location>
</feature>
<feature type="binding site" evidence="1">
    <location>
        <position position="81"/>
    </location>
    <ligand>
        <name>Mg(2+)</name>
        <dbReference type="ChEBI" id="CHEBI:18420"/>
    </ligand>
</feature>
<feature type="binding site" evidence="1">
    <location>
        <position position="122"/>
    </location>
    <ligand>
        <name>[2Fe-2S] cluster</name>
        <dbReference type="ChEBI" id="CHEBI:190135"/>
    </ligand>
</feature>
<feature type="binding site" evidence="1">
    <location>
        <position position="123"/>
    </location>
    <ligand>
        <name>Mg(2+)</name>
        <dbReference type="ChEBI" id="CHEBI:18420"/>
    </ligand>
</feature>
<feature type="binding site" description="via carbamate group" evidence="1">
    <location>
        <position position="124"/>
    </location>
    <ligand>
        <name>Mg(2+)</name>
        <dbReference type="ChEBI" id="CHEBI:18420"/>
    </ligand>
</feature>
<feature type="binding site" evidence="1">
    <location>
        <position position="195"/>
    </location>
    <ligand>
        <name>[2Fe-2S] cluster</name>
        <dbReference type="ChEBI" id="CHEBI:190135"/>
    </ligand>
</feature>
<feature type="binding site" evidence="1">
    <location>
        <position position="491"/>
    </location>
    <ligand>
        <name>Mg(2+)</name>
        <dbReference type="ChEBI" id="CHEBI:18420"/>
    </ligand>
</feature>
<feature type="modified residue" description="N6-carboxylysine" evidence="1">
    <location>
        <position position="124"/>
    </location>
</feature>
<keyword id="KW-0001">2Fe-2S</keyword>
<keyword id="KW-0028">Amino-acid biosynthesis</keyword>
<keyword id="KW-0100">Branched-chain amino acid biosynthesis</keyword>
<keyword id="KW-0408">Iron</keyword>
<keyword id="KW-0411">Iron-sulfur</keyword>
<keyword id="KW-0456">Lyase</keyword>
<keyword id="KW-0460">Magnesium</keyword>
<keyword id="KW-0479">Metal-binding</keyword>